<accession>Q10RE5</accession>
<accession>B7EP63</accession>
<accession>O81276</accession>
<accession>Q58FK4</accession>
<accession>Q8H7Y5</accession>
<sequence length="198" mass="23498">MENQFQDGKEEVIEAWYMDDSEEDQRLPHHREPKEFIPLSKLSELGILSWRLNADDWENDENLKKIREARGYSYMDICDVCPEKLPNYEAKLKNFFEEHLHTDEEIRYCLEGSGYFDVRDQNDQWIRVAVKKGGMIVLPAGMYHRFTLDSDNYIKAMRLFVGEPVWTPYNRPHDHLPARKEYVEKIINRGGTQAVEAR</sequence>
<feature type="chain" id="PRO_0000223197" description="Acireductone dioxygenase 2">
    <location>
        <begin position="1"/>
        <end position="198"/>
    </location>
</feature>
<feature type="binding site" evidence="1">
    <location>
        <position position="99"/>
    </location>
    <ligand>
        <name>Fe(2+)</name>
        <dbReference type="ChEBI" id="CHEBI:29033"/>
        <note>for iron-dependent acireductone dioxygenase activity</note>
    </ligand>
</feature>
<feature type="binding site" evidence="1">
    <location>
        <position position="99"/>
    </location>
    <ligand>
        <name>Ni(2+)</name>
        <dbReference type="ChEBI" id="CHEBI:49786"/>
        <note>for nickel-dependent acireductone dioxygenase activity</note>
    </ligand>
</feature>
<feature type="binding site" evidence="1">
    <location>
        <position position="101"/>
    </location>
    <ligand>
        <name>Fe(2+)</name>
        <dbReference type="ChEBI" id="CHEBI:29033"/>
        <note>for iron-dependent acireductone dioxygenase activity</note>
    </ligand>
</feature>
<feature type="binding site" evidence="1">
    <location>
        <position position="101"/>
    </location>
    <ligand>
        <name>Ni(2+)</name>
        <dbReference type="ChEBI" id="CHEBI:49786"/>
        <note>for nickel-dependent acireductone dioxygenase activity</note>
    </ligand>
</feature>
<feature type="binding site" evidence="1">
    <location>
        <position position="105"/>
    </location>
    <ligand>
        <name>Fe(2+)</name>
        <dbReference type="ChEBI" id="CHEBI:29033"/>
        <note>for iron-dependent acireductone dioxygenase activity</note>
    </ligand>
</feature>
<feature type="binding site" evidence="1">
    <location>
        <position position="105"/>
    </location>
    <ligand>
        <name>Ni(2+)</name>
        <dbReference type="ChEBI" id="CHEBI:49786"/>
        <note>for nickel-dependent acireductone dioxygenase activity</note>
    </ligand>
</feature>
<feature type="binding site" evidence="1">
    <location>
        <position position="144"/>
    </location>
    <ligand>
        <name>Fe(2+)</name>
        <dbReference type="ChEBI" id="CHEBI:29033"/>
        <note>for iron-dependent acireductone dioxygenase activity</note>
    </ligand>
</feature>
<feature type="binding site" evidence="1">
    <location>
        <position position="144"/>
    </location>
    <ligand>
        <name>Ni(2+)</name>
        <dbReference type="ChEBI" id="CHEBI:49786"/>
        <note>for nickel-dependent acireductone dioxygenase activity</note>
    </ligand>
</feature>
<feature type="sequence conflict" description="In Ref. 1; AAX55895." evidence="3" ref="1">
    <original>V</original>
    <variation>L</variation>
    <location>
        <position position="183"/>
    </location>
</feature>
<keyword id="KW-0028">Amino-acid biosynthesis</keyword>
<keyword id="KW-0963">Cytoplasm</keyword>
<keyword id="KW-0223">Dioxygenase</keyword>
<keyword id="KW-0408">Iron</keyword>
<keyword id="KW-0479">Metal-binding</keyword>
<keyword id="KW-0486">Methionine biosynthesis</keyword>
<keyword id="KW-0533">Nickel</keyword>
<keyword id="KW-0539">Nucleus</keyword>
<keyword id="KW-0560">Oxidoreductase</keyword>
<keyword id="KW-1185">Reference proteome</keyword>
<reference key="1">
    <citation type="journal article" date="2005" name="Gene">
        <title>Identification and characterization of a novel water-deficit-suppressed gene OsARD encoding an aci-reductone-dioxygenase-like protein in rice.</title>
        <authorList>
            <person name="Lin T."/>
            <person name="He X.W."/>
            <person name="Yang L."/>
            <person name="Shou H.X."/>
            <person name="Wu P."/>
        </authorList>
    </citation>
    <scope>NUCLEOTIDE SEQUENCE [MRNA]</scope>
    <scope>INDUCTION</scope>
    <source>
        <tissue>Root</tissue>
    </source>
</reference>
<reference key="2">
    <citation type="journal article" date="2005" name="Genome Res.">
        <title>Sequence, annotation, and analysis of synteny between rice chromosome 3 and diverged grass species.</title>
        <authorList>
            <consortium name="The rice chromosome 3 sequencing consortium"/>
            <person name="Buell C.R."/>
            <person name="Yuan Q."/>
            <person name="Ouyang S."/>
            <person name="Liu J."/>
            <person name="Zhu W."/>
            <person name="Wang A."/>
            <person name="Maiti R."/>
            <person name="Haas B."/>
            <person name="Wortman J."/>
            <person name="Pertea M."/>
            <person name="Jones K.M."/>
            <person name="Kim M."/>
            <person name="Overton L."/>
            <person name="Tsitrin T."/>
            <person name="Fadrosh D."/>
            <person name="Bera J."/>
            <person name="Weaver B."/>
            <person name="Jin S."/>
            <person name="Johri S."/>
            <person name="Reardon M."/>
            <person name="Webb K."/>
            <person name="Hill J."/>
            <person name="Moffat K."/>
            <person name="Tallon L."/>
            <person name="Van Aken S."/>
            <person name="Lewis M."/>
            <person name="Utterback T."/>
            <person name="Feldblyum T."/>
            <person name="Zismann V."/>
            <person name="Iobst S."/>
            <person name="Hsiao J."/>
            <person name="de Vazeille A.R."/>
            <person name="Salzberg S.L."/>
            <person name="White O."/>
            <person name="Fraser C.M."/>
            <person name="Yu Y."/>
            <person name="Kim H."/>
            <person name="Rambo T."/>
            <person name="Currie J."/>
            <person name="Collura K."/>
            <person name="Kernodle-Thompson S."/>
            <person name="Wei F."/>
            <person name="Kudrna K."/>
            <person name="Ammiraju J.S.S."/>
            <person name="Luo M."/>
            <person name="Goicoechea J.L."/>
            <person name="Wing R.A."/>
            <person name="Henry D."/>
            <person name="Oates R."/>
            <person name="Palmer M."/>
            <person name="Pries G."/>
            <person name="Saski C."/>
            <person name="Simmons J."/>
            <person name="Soderlund C."/>
            <person name="Nelson W."/>
            <person name="de la Bastide M."/>
            <person name="Spiegel L."/>
            <person name="Nascimento L."/>
            <person name="Huang E."/>
            <person name="Preston R."/>
            <person name="Zutavern T."/>
            <person name="Palmer L."/>
            <person name="O'Shaughnessy A."/>
            <person name="Dike S."/>
            <person name="McCombie W.R."/>
            <person name="Minx P."/>
            <person name="Cordum H."/>
            <person name="Wilson R."/>
            <person name="Jin W."/>
            <person name="Lee H.R."/>
            <person name="Jiang J."/>
            <person name="Jackson S."/>
        </authorList>
    </citation>
    <scope>NUCLEOTIDE SEQUENCE [LARGE SCALE GENOMIC DNA]</scope>
    <source>
        <strain>cv. Nipponbare</strain>
    </source>
</reference>
<reference key="3">
    <citation type="journal article" date="2005" name="Nature">
        <title>The map-based sequence of the rice genome.</title>
        <authorList>
            <consortium name="International rice genome sequencing project (IRGSP)"/>
        </authorList>
    </citation>
    <scope>NUCLEOTIDE SEQUENCE [LARGE SCALE GENOMIC DNA]</scope>
    <source>
        <strain>cv. Nipponbare</strain>
    </source>
</reference>
<reference key="4">
    <citation type="journal article" date="2008" name="Nucleic Acids Res.">
        <title>The rice annotation project database (RAP-DB): 2008 update.</title>
        <authorList>
            <consortium name="The rice annotation project (RAP)"/>
        </authorList>
    </citation>
    <scope>GENOME REANNOTATION</scope>
    <source>
        <strain>cv. Nipponbare</strain>
    </source>
</reference>
<reference key="5">
    <citation type="journal article" date="2013" name="Rice">
        <title>Improvement of the Oryza sativa Nipponbare reference genome using next generation sequence and optical map data.</title>
        <authorList>
            <person name="Kawahara Y."/>
            <person name="de la Bastide M."/>
            <person name="Hamilton J.P."/>
            <person name="Kanamori H."/>
            <person name="McCombie W.R."/>
            <person name="Ouyang S."/>
            <person name="Schwartz D.C."/>
            <person name="Tanaka T."/>
            <person name="Wu J."/>
            <person name="Zhou S."/>
            <person name="Childs K.L."/>
            <person name="Davidson R.M."/>
            <person name="Lin H."/>
            <person name="Quesada-Ocampo L."/>
            <person name="Vaillancourt B."/>
            <person name="Sakai H."/>
            <person name="Lee S.S."/>
            <person name="Kim J."/>
            <person name="Numa H."/>
            <person name="Itoh T."/>
            <person name="Buell C.R."/>
            <person name="Matsumoto T."/>
        </authorList>
    </citation>
    <scope>GENOME REANNOTATION</scope>
    <source>
        <strain>cv. Nipponbare</strain>
    </source>
</reference>
<reference key="6">
    <citation type="journal article" date="2005" name="PLoS Biol.">
        <title>The genomes of Oryza sativa: a history of duplications.</title>
        <authorList>
            <person name="Yu J."/>
            <person name="Wang J."/>
            <person name="Lin W."/>
            <person name="Li S."/>
            <person name="Li H."/>
            <person name="Zhou J."/>
            <person name="Ni P."/>
            <person name="Dong W."/>
            <person name="Hu S."/>
            <person name="Zeng C."/>
            <person name="Zhang J."/>
            <person name="Zhang Y."/>
            <person name="Li R."/>
            <person name="Xu Z."/>
            <person name="Li S."/>
            <person name="Li X."/>
            <person name="Zheng H."/>
            <person name="Cong L."/>
            <person name="Lin L."/>
            <person name="Yin J."/>
            <person name="Geng J."/>
            <person name="Li G."/>
            <person name="Shi J."/>
            <person name="Liu J."/>
            <person name="Lv H."/>
            <person name="Li J."/>
            <person name="Wang J."/>
            <person name="Deng Y."/>
            <person name="Ran L."/>
            <person name="Shi X."/>
            <person name="Wang X."/>
            <person name="Wu Q."/>
            <person name="Li C."/>
            <person name="Ren X."/>
            <person name="Wang J."/>
            <person name="Wang X."/>
            <person name="Li D."/>
            <person name="Liu D."/>
            <person name="Zhang X."/>
            <person name="Ji Z."/>
            <person name="Zhao W."/>
            <person name="Sun Y."/>
            <person name="Zhang Z."/>
            <person name="Bao J."/>
            <person name="Han Y."/>
            <person name="Dong L."/>
            <person name="Ji J."/>
            <person name="Chen P."/>
            <person name="Wu S."/>
            <person name="Liu J."/>
            <person name="Xiao Y."/>
            <person name="Bu D."/>
            <person name="Tan J."/>
            <person name="Yang L."/>
            <person name="Ye C."/>
            <person name="Zhang J."/>
            <person name="Xu J."/>
            <person name="Zhou Y."/>
            <person name="Yu Y."/>
            <person name="Zhang B."/>
            <person name="Zhuang S."/>
            <person name="Wei H."/>
            <person name="Liu B."/>
            <person name="Lei M."/>
            <person name="Yu H."/>
            <person name="Li Y."/>
            <person name="Xu H."/>
            <person name="Wei S."/>
            <person name="He X."/>
            <person name="Fang L."/>
            <person name="Zhang Z."/>
            <person name="Zhang Y."/>
            <person name="Huang X."/>
            <person name="Su Z."/>
            <person name="Tong W."/>
            <person name="Li J."/>
            <person name="Tong Z."/>
            <person name="Li S."/>
            <person name="Ye J."/>
            <person name="Wang L."/>
            <person name="Fang L."/>
            <person name="Lei T."/>
            <person name="Chen C.-S."/>
            <person name="Chen H.-C."/>
            <person name="Xu Z."/>
            <person name="Li H."/>
            <person name="Huang H."/>
            <person name="Zhang F."/>
            <person name="Xu H."/>
            <person name="Li N."/>
            <person name="Zhao C."/>
            <person name="Li S."/>
            <person name="Dong L."/>
            <person name="Huang Y."/>
            <person name="Li L."/>
            <person name="Xi Y."/>
            <person name="Qi Q."/>
            <person name="Li W."/>
            <person name="Zhang B."/>
            <person name="Hu W."/>
            <person name="Zhang Y."/>
            <person name="Tian X."/>
            <person name="Jiao Y."/>
            <person name="Liang X."/>
            <person name="Jin J."/>
            <person name="Gao L."/>
            <person name="Zheng W."/>
            <person name="Hao B."/>
            <person name="Liu S.-M."/>
            <person name="Wang W."/>
            <person name="Yuan L."/>
            <person name="Cao M."/>
            <person name="McDermott J."/>
            <person name="Samudrala R."/>
            <person name="Wang J."/>
            <person name="Wong G.K.-S."/>
            <person name="Yang H."/>
        </authorList>
    </citation>
    <scope>NUCLEOTIDE SEQUENCE [LARGE SCALE GENOMIC DNA]</scope>
    <source>
        <strain>cv. Nipponbare</strain>
    </source>
</reference>
<reference key="7">
    <citation type="journal article" date="2003" name="Science">
        <title>Collection, mapping, and annotation of over 28,000 cDNA clones from japonica rice.</title>
        <authorList>
            <consortium name="The rice full-length cDNA consortium"/>
        </authorList>
    </citation>
    <scope>NUCLEOTIDE SEQUENCE [LARGE SCALE MRNA]</scope>
    <source>
        <strain>cv. Nipponbare</strain>
    </source>
</reference>
<organism>
    <name type="scientific">Oryza sativa subsp. japonica</name>
    <name type="common">Rice</name>
    <dbReference type="NCBI Taxonomy" id="39947"/>
    <lineage>
        <taxon>Eukaryota</taxon>
        <taxon>Viridiplantae</taxon>
        <taxon>Streptophyta</taxon>
        <taxon>Embryophyta</taxon>
        <taxon>Tracheophyta</taxon>
        <taxon>Spermatophyta</taxon>
        <taxon>Magnoliopsida</taxon>
        <taxon>Liliopsida</taxon>
        <taxon>Poales</taxon>
        <taxon>Poaceae</taxon>
        <taxon>BOP clade</taxon>
        <taxon>Oryzoideae</taxon>
        <taxon>Oryzeae</taxon>
        <taxon>Oryzinae</taxon>
        <taxon>Oryza</taxon>
        <taxon>Oryza sativa</taxon>
    </lineage>
</organism>
<evidence type="ECO:0000255" key="1">
    <source>
        <dbReference type="HAMAP-Rule" id="MF_03154"/>
    </source>
</evidence>
<evidence type="ECO:0000269" key="2">
    <source>
    </source>
</evidence>
<evidence type="ECO:0000305" key="3"/>
<evidence type="ECO:0000312" key="4">
    <source>
        <dbReference type="EMBL" id="EEE58367.1"/>
    </source>
</evidence>
<gene>
    <name type="primary">ARD2</name>
    <name type="synonym">SIP2A</name>
    <name type="ordered locus">Os03g0161800</name>
    <name type="ordered locus">LOC_Os03g06620</name>
    <name type="ORF">OJ1607A12.13</name>
    <name evidence="4" type="ORF">OsJ_09506</name>
</gene>
<dbReference type="EC" id="1.13.11.54" evidence="1"/>
<dbReference type="EC" id="1.13.11.53" evidence="1"/>
<dbReference type="EMBL" id="AY955841">
    <property type="protein sequence ID" value="AAX55895.1"/>
    <property type="molecule type" value="mRNA"/>
</dbReference>
<dbReference type="EMBL" id="AC105729">
    <property type="protein sequence ID" value="AAN06863.1"/>
    <property type="status" value="ALT_SEQ"/>
    <property type="molecule type" value="Genomic_DNA"/>
</dbReference>
<dbReference type="EMBL" id="DP000009">
    <property type="protein sequence ID" value="ABF94117.1"/>
    <property type="molecule type" value="Genomic_DNA"/>
</dbReference>
<dbReference type="EMBL" id="AP008209">
    <property type="protein sequence ID" value="BAF10960.1"/>
    <property type="molecule type" value="Genomic_DNA"/>
</dbReference>
<dbReference type="EMBL" id="AP014959">
    <property type="protein sequence ID" value="BAS82421.1"/>
    <property type="molecule type" value="Genomic_DNA"/>
</dbReference>
<dbReference type="EMBL" id="CM000140">
    <property type="protein sequence ID" value="EEE58367.1"/>
    <property type="molecule type" value="Genomic_DNA"/>
</dbReference>
<dbReference type="EMBL" id="AK099497">
    <property type="protein sequence ID" value="BAG94160.1"/>
    <property type="molecule type" value="mRNA"/>
</dbReference>
<dbReference type="SMR" id="Q10RE5"/>
<dbReference type="FunCoup" id="Q10RE5">
    <property type="interactions" value="2212"/>
</dbReference>
<dbReference type="STRING" id="39947.Q10RE5"/>
<dbReference type="PaxDb" id="39947-Q10RE5"/>
<dbReference type="EnsemblPlants" id="Os03t0161800-01">
    <property type="protein sequence ID" value="Os03t0161800-01"/>
    <property type="gene ID" value="Os03g0161800"/>
</dbReference>
<dbReference type="Gramene" id="Os03t0161800-01">
    <property type="protein sequence ID" value="Os03t0161800-01"/>
    <property type="gene ID" value="Os03g0161800"/>
</dbReference>
<dbReference type="KEGG" id="dosa:Os03g0161800"/>
<dbReference type="eggNOG" id="KOG2107">
    <property type="taxonomic scope" value="Eukaryota"/>
</dbReference>
<dbReference type="HOGENOM" id="CLU_090154_0_1_1"/>
<dbReference type="InParanoid" id="Q10RE5"/>
<dbReference type="OMA" id="WYMDESQ"/>
<dbReference type="UniPathway" id="UPA00904">
    <property type="reaction ID" value="UER00878"/>
</dbReference>
<dbReference type="Proteomes" id="UP000000763">
    <property type="component" value="Chromosome 3"/>
</dbReference>
<dbReference type="Proteomes" id="UP000007752">
    <property type="component" value="Chromosome 3"/>
</dbReference>
<dbReference type="Proteomes" id="UP000059680">
    <property type="component" value="Chromosome 3"/>
</dbReference>
<dbReference type="ExpressionAtlas" id="Q10RE5">
    <property type="expression patterns" value="baseline and differential"/>
</dbReference>
<dbReference type="GO" id="GO:0005737">
    <property type="term" value="C:cytoplasm"/>
    <property type="evidence" value="ECO:0007669"/>
    <property type="project" value="UniProtKB-SubCell"/>
</dbReference>
<dbReference type="GO" id="GO:0005634">
    <property type="term" value="C:nucleus"/>
    <property type="evidence" value="ECO:0007669"/>
    <property type="project" value="UniProtKB-SubCell"/>
</dbReference>
<dbReference type="GO" id="GO:0010308">
    <property type="term" value="F:acireductone dioxygenase (Ni2+-requiring) activity"/>
    <property type="evidence" value="ECO:0007669"/>
    <property type="project" value="UniProtKB-UniRule"/>
</dbReference>
<dbReference type="GO" id="GO:0010309">
    <property type="term" value="F:acireductone dioxygenase [iron(II)-requiring] activity"/>
    <property type="evidence" value="ECO:0000318"/>
    <property type="project" value="GO_Central"/>
</dbReference>
<dbReference type="GO" id="GO:0005506">
    <property type="term" value="F:iron ion binding"/>
    <property type="evidence" value="ECO:0007669"/>
    <property type="project" value="UniProtKB-UniRule"/>
</dbReference>
<dbReference type="GO" id="GO:0016151">
    <property type="term" value="F:nickel cation binding"/>
    <property type="evidence" value="ECO:0007669"/>
    <property type="project" value="UniProtKB-UniRule"/>
</dbReference>
<dbReference type="GO" id="GO:0019509">
    <property type="term" value="P:L-methionine salvage from methylthioadenosine"/>
    <property type="evidence" value="ECO:0007669"/>
    <property type="project" value="UniProtKB-UniRule"/>
</dbReference>
<dbReference type="GO" id="GO:0006555">
    <property type="term" value="P:methionine metabolic process"/>
    <property type="evidence" value="ECO:0000318"/>
    <property type="project" value="GO_Central"/>
</dbReference>
<dbReference type="CDD" id="cd02232">
    <property type="entry name" value="cupin_ARD"/>
    <property type="match status" value="1"/>
</dbReference>
<dbReference type="FunFam" id="2.60.120.10:FF:000031">
    <property type="entry name" value="1,2-dihydroxy-3-keto-5-methylthiopentene dioxygenase"/>
    <property type="match status" value="1"/>
</dbReference>
<dbReference type="Gene3D" id="2.60.120.10">
    <property type="entry name" value="Jelly Rolls"/>
    <property type="match status" value="1"/>
</dbReference>
<dbReference type="HAMAP" id="MF_03154">
    <property type="entry name" value="Salvage_MtnD_euk"/>
    <property type="match status" value="1"/>
</dbReference>
<dbReference type="InterPro" id="IPR004313">
    <property type="entry name" value="ARD"/>
</dbReference>
<dbReference type="InterPro" id="IPR027496">
    <property type="entry name" value="ARD_euk"/>
</dbReference>
<dbReference type="InterPro" id="IPR014710">
    <property type="entry name" value="RmlC-like_jellyroll"/>
</dbReference>
<dbReference type="InterPro" id="IPR011051">
    <property type="entry name" value="RmlC_Cupin_sf"/>
</dbReference>
<dbReference type="PANTHER" id="PTHR23418">
    <property type="entry name" value="ACIREDUCTONE DIOXYGENASE"/>
    <property type="match status" value="1"/>
</dbReference>
<dbReference type="PANTHER" id="PTHR23418:SF17">
    <property type="entry name" value="ACIREDUCTONE DIOXYGENASE 2"/>
    <property type="match status" value="1"/>
</dbReference>
<dbReference type="Pfam" id="PF03079">
    <property type="entry name" value="ARD"/>
    <property type="match status" value="1"/>
</dbReference>
<dbReference type="SUPFAM" id="SSF51182">
    <property type="entry name" value="RmlC-like cupins"/>
    <property type="match status" value="1"/>
</dbReference>
<comment type="function">
    <text evidence="1">Catalyzes 2 different reactions between oxygen and the acireductone 1,2-dihydroxy-3-keto-5-methylthiopentene (DHK-MTPene) depending upon the metal bound in the active site. Fe-containing acireductone dioxygenase (Fe-ARD) produces formate and 2-keto-4-methylthiobutyrate (KMTB), the alpha-ketoacid precursor of methionine in the methionine recycle pathway. Ni-containing acireductone dioxygenase (Ni-ARD) produces methylthiopropionate, carbon monoxide and formate, and does not lie on the methionine recycle pathway.</text>
</comment>
<comment type="catalytic activity">
    <reaction evidence="1">
        <text>1,2-dihydroxy-5-(methylsulfanyl)pent-1-en-3-one + O2 = 4-methylsulfanyl-2-oxobutanoate + formate + 2 H(+)</text>
        <dbReference type="Rhea" id="RHEA:24504"/>
        <dbReference type="ChEBI" id="CHEBI:15378"/>
        <dbReference type="ChEBI" id="CHEBI:15379"/>
        <dbReference type="ChEBI" id="CHEBI:15740"/>
        <dbReference type="ChEBI" id="CHEBI:16723"/>
        <dbReference type="ChEBI" id="CHEBI:49252"/>
        <dbReference type="EC" id="1.13.11.54"/>
    </reaction>
</comment>
<comment type="catalytic activity">
    <reaction evidence="1">
        <text>1,2-dihydroxy-5-(methylsulfanyl)pent-1-en-3-one + O2 = 3-(methylsulfanyl)propanoate + CO + formate + 2 H(+)</text>
        <dbReference type="Rhea" id="RHEA:14161"/>
        <dbReference type="ChEBI" id="CHEBI:15378"/>
        <dbReference type="ChEBI" id="CHEBI:15379"/>
        <dbReference type="ChEBI" id="CHEBI:15740"/>
        <dbReference type="ChEBI" id="CHEBI:17245"/>
        <dbReference type="ChEBI" id="CHEBI:49016"/>
        <dbReference type="ChEBI" id="CHEBI:49252"/>
        <dbReference type="EC" id="1.13.11.53"/>
    </reaction>
</comment>
<comment type="cofactor">
    <cofactor evidence="1">
        <name>Fe(2+)</name>
        <dbReference type="ChEBI" id="CHEBI:29033"/>
    </cofactor>
    <cofactor evidence="1">
        <name>Ni(2+)</name>
        <dbReference type="ChEBI" id="CHEBI:49786"/>
    </cofactor>
    <text evidence="1">Binds either 1 Fe or Ni cation per monomer. Iron-binding promotes an acireductone dioxygenase reaction producing 2-keto-4-methylthiobutyrate, while nickel-binding promotes an acireductone dioxygenase reaction producing 3-(methylsulfanyl)propanoate.</text>
</comment>
<comment type="pathway">
    <text evidence="1">Amino-acid biosynthesis; L-methionine biosynthesis via salvage pathway; L-methionine from S-methyl-5-thio-alpha-D-ribose 1-phosphate: step 5/6.</text>
</comment>
<comment type="subcellular location">
    <subcellularLocation>
        <location evidence="1">Cytoplasm</location>
    </subcellularLocation>
    <subcellularLocation>
        <location evidence="1">Nucleus</location>
    </subcellularLocation>
</comment>
<comment type="induction">
    <text evidence="2">By submergence in root tips and lateral roots of seedlings. Down-regulated by water deficit.</text>
</comment>
<comment type="similarity">
    <text evidence="1">Belongs to the acireductone dioxygenase (ARD) family.</text>
</comment>
<comment type="sequence caution" evidence="3">
    <conflict type="erroneous gene model prediction">
        <sequence resource="EMBL-CDS" id="AAN06863"/>
    </conflict>
</comment>
<name>MTND2_ORYSJ</name>
<protein>
    <recommendedName>
        <fullName evidence="1">Acireductone dioxygenase 2</fullName>
    </recommendedName>
    <alternativeName>
        <fullName evidence="1">Acireductone dioxygenase (Fe(2+)-requiring) 2</fullName>
        <shortName evidence="1">ARD' 2</shortName>
        <shortName evidence="1">Fe-ARD 2</shortName>
        <ecNumber evidence="1">1.13.11.54</ecNumber>
    </alternativeName>
    <alternativeName>
        <fullName evidence="1">Acireductone dioxygenase (Ni(2+)-requiring) 2</fullName>
        <shortName evidence="1">ARD 2</shortName>
        <shortName evidence="1">Ni-ARD 2</shortName>
        <ecNumber evidence="1">1.13.11.53</ecNumber>
    </alternativeName>
    <alternativeName>
        <fullName>Submergence-induced protein 2A</fullName>
    </alternativeName>
</protein>
<proteinExistence type="evidence at transcript level"/>